<evidence type="ECO:0000250" key="1">
    <source>
        <dbReference type="UniProtKB" id="P03279"/>
    </source>
</evidence>
<evidence type="ECO:0000250" key="2">
    <source>
        <dbReference type="UniProtKB" id="P12537"/>
    </source>
</evidence>
<evidence type="ECO:0000255" key="3">
    <source>
        <dbReference type="HAMAP-Rule" id="MF_04047"/>
    </source>
</evidence>
<evidence type="ECO:0000256" key="4">
    <source>
        <dbReference type="SAM" id="MobiDB-lite"/>
    </source>
</evidence>
<evidence type="ECO:0000305" key="5"/>
<organismHost>
    <name type="scientific">Galliformes</name>
    <dbReference type="NCBI Taxonomy" id="8976"/>
</organismHost>
<protein>
    <recommendedName>
        <fullName evidence="3">Pre-hexon-linking protein IIIa</fullName>
    </recommendedName>
    <alternativeName>
        <fullName evidence="3">Capsid vertex-specific component IIIa</fullName>
        <shortName evidence="3">CVSC</shortName>
    </alternativeName>
    <alternativeName>
        <fullName evidence="3">Protein IIIa</fullName>
    </alternativeName>
    <alternativeName>
        <fullName evidence="3">pIIIa</fullName>
    </alternativeName>
    <component>
        <recommendedName>
            <fullName evidence="3">Hexon-linking protein IIIa</fullName>
        </recommendedName>
    </component>
</protein>
<proteinExistence type="inferred from homology"/>
<comment type="function">
    <text evidence="3">Structural component of the virion that acts as a cement protein on the capsid exterior which mediates the interactions between the hexons, including the peripentonal hexons, and reaches all the way to the penton vertices. Two hexon linking proteins IIIa, one from each facet, stabilize the unique edge interface between a pair of facets. As the virus enters the host cell, hexon linking proteins IIIa are shed concomitant with virion acidification in the endosome. During virus assembly, seems to play a role in the serotype specificity of the packaging of viral DNA via its interaction with packaging protein 3.</text>
</comment>
<comment type="subunit">
    <text evidence="2 3">Interacts with hexon proteins; this interaction tethers the peripentonal hexons to hexons situated in the facet. Interacts with the penton protein (via N-terminus). Interacts with packaging protein 3; this interaction is required to promote correct genome packaging.</text>
</comment>
<comment type="subcellular location">
    <subcellularLocation>
        <location evidence="2 3">Virion</location>
    </subcellularLocation>
    <subcellularLocation>
        <location evidence="2 3">Host nucleus</location>
    </subcellularLocation>
    <text evidence="2 3">Surrounds the border of each facet on the capsid exterior. Present in around 60 copies per virion.</text>
</comment>
<comment type="induction">
    <text evidence="3">Expressed in the late phase of the viral replicative cycle.</text>
</comment>
<comment type="PTM">
    <text evidence="1 3">Cleaved near the C-terminus by the viral protease during virion maturation to form the mature protein.</text>
</comment>
<comment type="miscellaneous">
    <text evidence="3">All late proteins expressed from the major late promoter are produced by alternative splicing and alternative polyadenylation of the same gene giving rise to non-overlapping ORFs. A leader sequence is present in the N-terminus of all these mRNAs and is recognized by the viral shutoff protein to provide expression although conventional translation via ribosome scanning from the cap has been shut off in the host cell.</text>
</comment>
<comment type="similarity">
    <text evidence="3 5">Belongs to the adenoviridae hexon-linking protein IIIa family.</text>
</comment>
<keyword id="KW-1232">Capsid decoration protein</keyword>
<keyword id="KW-0167">Capsid protein</keyword>
<keyword id="KW-1048">Host nucleus</keyword>
<keyword id="KW-0426">Late protein</keyword>
<keyword id="KW-0597">Phosphoprotein</keyword>
<keyword id="KW-1185">Reference proteome</keyword>
<keyword id="KW-0231">Viral genome packaging</keyword>
<keyword id="KW-1188">Viral release from host cell</keyword>
<keyword id="KW-0946">Virion</keyword>
<reference key="1">
    <citation type="journal article" date="1996" name="J. Virol.">
        <title>The complete DNA sequence and genomic organization of the avian adenovirus CELO.</title>
        <authorList>
            <person name="Chiocca S."/>
            <person name="Kurzbauer R."/>
            <person name="Schaffner G."/>
            <person name="Baker A."/>
            <person name="Mautner V."/>
            <person name="Cotten M."/>
        </authorList>
    </citation>
    <scope>NUCLEOTIDE SEQUENCE [LARGE SCALE GENOMIC DNA]</scope>
</reference>
<feature type="chain" id="PRO_0000221839" description="Pre-hexon-linking protein IIIa" evidence="3">
    <location>
        <begin position="1"/>
        <end position="575"/>
    </location>
</feature>
<feature type="chain" id="PRO_0000439410" description="Hexon-linking protein IIIa" evidence="3">
    <location>
        <begin position="1"/>
        <end position="514"/>
    </location>
</feature>
<feature type="propeptide" id="PRO_0000439411" evidence="3">
    <location>
        <begin position="515"/>
        <end position="575"/>
    </location>
</feature>
<feature type="region of interest" description="Peripentonal hexon-tethering domain" evidence="3">
    <location>
        <begin position="1"/>
        <end position="95"/>
    </location>
</feature>
<feature type="region of interest" description="Binding to hexon-linking protein" evidence="3">
    <location>
        <begin position="129"/>
        <end position="243"/>
    </location>
</feature>
<feature type="region of interest" description="Disordered" evidence="4">
    <location>
        <begin position="525"/>
        <end position="549"/>
    </location>
</feature>
<feature type="site" description="Cleavage; by viral protease" evidence="3">
    <location>
        <begin position="514"/>
        <end position="515"/>
    </location>
</feature>
<feature type="modified residue" description="Phosphoserine; by host" evidence="3">
    <location>
        <position position="497"/>
    </location>
</feature>
<sequence length="575" mass="63775">MTSSDTFLALAPYGRQEVADALSSLPDGKDARSLRHAPYANRLIKLQSAMVPPKVDGTSERVAEIVKGLAEQGAIYPDQMGAIHSDLLNRAYTWNSMGVQESIQALVNDVIHGQNRTLQDELARTKEIANASLLTQFFDSLYKTVDRGQRNFEGFKKLLRLFVNNVPNAEVYGSSGSFSVQINLGGSSQNINLTNAFENLKPIWGARWDAVNNPRIGALLTPNTRALLFFVSSFYDYGAMEPGSYLDNIMRLYKEAIRADVDAEGDAIMELGEAGANLNLRFNDYKDTLNYLLQNREVVPDTAPLELSAEQEMLLKYLMRQLRQALKDGVPADISISTMTQYLDPRLYQTNKVFVEKLQNYLLAAQARNPVYYRLLVLDPNWRPPAGLYTGNYVIPDRYDFEDVQSELEYAGPSRDEYFDDSLFAPGPQRRLNSAEEAQLERDIESLTGHIDEELGVQSQAGWLADHRLPVAFDGALSLTERNAYNTPLPPDSHMRSRSSSVASDLGLLNLSGTGGPGFFASLRPSIGSRQPTGTAVGLRPTTPYSGSGCMRGTGLARKVLNPAASRRGRKLRFY</sequence>
<name>CAP3_ADEG1</name>
<accession>Q64754</accession>
<dbReference type="EMBL" id="U46933">
    <property type="protein sequence ID" value="AAC54907.1"/>
    <property type="molecule type" value="Genomic_DNA"/>
</dbReference>
<dbReference type="RefSeq" id="NP_043881.1">
    <property type="nucleotide sequence ID" value="NC_001720.1"/>
</dbReference>
<dbReference type="SMR" id="Q64754"/>
<dbReference type="GeneID" id="1476560"/>
<dbReference type="KEGG" id="vg:1476560"/>
<dbReference type="Proteomes" id="UP000001594">
    <property type="component" value="Segment"/>
</dbReference>
<dbReference type="GO" id="GO:0042025">
    <property type="term" value="C:host cell nucleus"/>
    <property type="evidence" value="ECO:0007669"/>
    <property type="project" value="UniProtKB-SubCell"/>
</dbReference>
<dbReference type="GO" id="GO:0098021">
    <property type="term" value="C:viral capsid, decoration"/>
    <property type="evidence" value="ECO:0007669"/>
    <property type="project" value="UniProtKB-UniRule"/>
</dbReference>
<dbReference type="Gene3D" id="1.20.120.1500">
    <property type="entry name" value="Pre-hexon-linking protein IIIa"/>
    <property type="match status" value="1"/>
</dbReference>
<dbReference type="HAMAP" id="MF_04047">
    <property type="entry name" value="ADV_CAP3"/>
    <property type="match status" value="1"/>
</dbReference>
<dbReference type="InterPro" id="IPR003479">
    <property type="entry name" value="Hex_IIIa"/>
</dbReference>
<dbReference type="InterPro" id="IPR043053">
    <property type="entry name" value="Hex_IIIa_N"/>
</dbReference>
<dbReference type="Pfam" id="PF02455">
    <property type="entry name" value="Hex_IIIa"/>
    <property type="match status" value="2"/>
</dbReference>
<organism>
    <name type="scientific">Fowl adenovirus A serotype 1 (strain CELO / Phelps)</name>
    <name type="common">FAdV-1</name>
    <name type="synonym">Avian adenovirus gal1 (strain Phelps)</name>
    <dbReference type="NCBI Taxonomy" id="10553"/>
    <lineage>
        <taxon>Viruses</taxon>
        <taxon>Varidnaviria</taxon>
        <taxon>Bamfordvirae</taxon>
        <taxon>Preplasmiviricota</taxon>
        <taxon>Tectiliviricetes</taxon>
        <taxon>Rowavirales</taxon>
        <taxon>Adenoviridae</taxon>
        <taxon>Aviadenovirus</taxon>
        <taxon>Fowl aviadenovirus A</taxon>
    </lineage>
</organism>